<evidence type="ECO:0000250" key="1"/>
<evidence type="ECO:0000305" key="2"/>
<reference key="1">
    <citation type="journal article" date="1996" name="DNA Res.">
        <title>Sequence analysis of the genome of the unicellular cyanobacterium Synechocystis sp. strain PCC6803. II. Sequence determination of the entire genome and assignment of potential protein-coding regions.</title>
        <authorList>
            <person name="Kaneko T."/>
            <person name="Sato S."/>
            <person name="Kotani H."/>
            <person name="Tanaka A."/>
            <person name="Asamizu E."/>
            <person name="Nakamura Y."/>
            <person name="Miyajima N."/>
            <person name="Hirosawa M."/>
            <person name="Sugiura M."/>
            <person name="Sasamoto S."/>
            <person name="Kimura T."/>
            <person name="Hosouchi T."/>
            <person name="Matsuno A."/>
            <person name="Muraki A."/>
            <person name="Nakazaki N."/>
            <person name="Naruo K."/>
            <person name="Okumura S."/>
            <person name="Shimpo S."/>
            <person name="Takeuchi C."/>
            <person name="Wada T."/>
            <person name="Watanabe A."/>
            <person name="Yamada M."/>
            <person name="Yasuda M."/>
            <person name="Tabata S."/>
        </authorList>
    </citation>
    <scope>NUCLEOTIDE SEQUENCE [LARGE SCALE GENOMIC DNA]</scope>
    <source>
        <strain>ATCC 27184 / PCC 6803 / Kazusa</strain>
    </source>
</reference>
<accession>P73316</accession>
<feature type="chain" id="PRO_0000129924" description="Small ribosomal subunit protein uS19">
    <location>
        <begin position="1"/>
        <end position="92"/>
    </location>
</feature>
<proteinExistence type="inferred from homology"/>
<sequence>MGRSLKKGPFVAASLLRKIDKLNDKGDKQVVKTWSRASTILPQMVGHTIAVHNGRQHVPVFVSEQMVGHKLGEFAPTRTFRSHSKSDKKARK</sequence>
<name>RS19_SYNY3</name>
<comment type="function">
    <text evidence="1">Protein S19 forms a complex with S13 that binds strongly to the 16S ribosomal RNA.</text>
</comment>
<comment type="similarity">
    <text evidence="2">Belongs to the universal ribosomal protein uS19 family.</text>
</comment>
<protein>
    <recommendedName>
        <fullName evidence="2">Small ribosomal subunit protein uS19</fullName>
    </recommendedName>
    <alternativeName>
        <fullName>30S ribosomal protein S19</fullName>
    </alternativeName>
</protein>
<organism>
    <name type="scientific">Synechocystis sp. (strain ATCC 27184 / PCC 6803 / Kazusa)</name>
    <dbReference type="NCBI Taxonomy" id="1111708"/>
    <lineage>
        <taxon>Bacteria</taxon>
        <taxon>Bacillati</taxon>
        <taxon>Cyanobacteriota</taxon>
        <taxon>Cyanophyceae</taxon>
        <taxon>Synechococcales</taxon>
        <taxon>Merismopediaceae</taxon>
        <taxon>Synechocystis</taxon>
    </lineage>
</organism>
<keyword id="KW-1185">Reference proteome</keyword>
<keyword id="KW-0687">Ribonucleoprotein</keyword>
<keyword id="KW-0689">Ribosomal protein</keyword>
<keyword id="KW-0694">RNA-binding</keyword>
<keyword id="KW-0699">rRNA-binding</keyword>
<dbReference type="EMBL" id="BA000022">
    <property type="protein sequence ID" value="BAA17345.1"/>
    <property type="molecule type" value="Genomic_DNA"/>
</dbReference>
<dbReference type="PIR" id="S77498">
    <property type="entry name" value="S77498"/>
</dbReference>
<dbReference type="SMR" id="P73316"/>
<dbReference type="FunCoup" id="P73316">
    <property type="interactions" value="448"/>
</dbReference>
<dbReference type="IntAct" id="P73316">
    <property type="interactions" value="3"/>
</dbReference>
<dbReference type="STRING" id="1148.gene:10498208"/>
<dbReference type="PaxDb" id="1148-1652423"/>
<dbReference type="EnsemblBacteria" id="BAA17345">
    <property type="protein sequence ID" value="BAA17345"/>
    <property type="gene ID" value="BAA17345"/>
</dbReference>
<dbReference type="KEGG" id="syn:ssl3432"/>
<dbReference type="eggNOG" id="COG0185">
    <property type="taxonomic scope" value="Bacteria"/>
</dbReference>
<dbReference type="InParanoid" id="P73316"/>
<dbReference type="PhylomeDB" id="P73316"/>
<dbReference type="Proteomes" id="UP000001425">
    <property type="component" value="Chromosome"/>
</dbReference>
<dbReference type="GO" id="GO:0005737">
    <property type="term" value="C:cytoplasm"/>
    <property type="evidence" value="ECO:0007669"/>
    <property type="project" value="UniProtKB-ARBA"/>
</dbReference>
<dbReference type="GO" id="GO:0015935">
    <property type="term" value="C:small ribosomal subunit"/>
    <property type="evidence" value="ECO:0007669"/>
    <property type="project" value="InterPro"/>
</dbReference>
<dbReference type="GO" id="GO:0019843">
    <property type="term" value="F:rRNA binding"/>
    <property type="evidence" value="ECO:0007669"/>
    <property type="project" value="UniProtKB-UniRule"/>
</dbReference>
<dbReference type="GO" id="GO:0003735">
    <property type="term" value="F:structural constituent of ribosome"/>
    <property type="evidence" value="ECO:0000318"/>
    <property type="project" value="GO_Central"/>
</dbReference>
<dbReference type="GO" id="GO:0000028">
    <property type="term" value="P:ribosomal small subunit assembly"/>
    <property type="evidence" value="ECO:0000318"/>
    <property type="project" value="GO_Central"/>
</dbReference>
<dbReference type="GO" id="GO:0006412">
    <property type="term" value="P:translation"/>
    <property type="evidence" value="ECO:0007669"/>
    <property type="project" value="UniProtKB-UniRule"/>
</dbReference>
<dbReference type="FunFam" id="3.30.860.10:FF:000001">
    <property type="entry name" value="30S ribosomal protein S19"/>
    <property type="match status" value="1"/>
</dbReference>
<dbReference type="Gene3D" id="3.30.860.10">
    <property type="entry name" value="30s Ribosomal Protein S19, Chain A"/>
    <property type="match status" value="1"/>
</dbReference>
<dbReference type="HAMAP" id="MF_00531">
    <property type="entry name" value="Ribosomal_uS19"/>
    <property type="match status" value="1"/>
</dbReference>
<dbReference type="InterPro" id="IPR002222">
    <property type="entry name" value="Ribosomal_uS19"/>
</dbReference>
<dbReference type="InterPro" id="IPR005732">
    <property type="entry name" value="Ribosomal_uS19_bac-type"/>
</dbReference>
<dbReference type="InterPro" id="IPR020934">
    <property type="entry name" value="Ribosomal_uS19_CS"/>
</dbReference>
<dbReference type="InterPro" id="IPR023575">
    <property type="entry name" value="Ribosomal_uS19_SF"/>
</dbReference>
<dbReference type="NCBIfam" id="TIGR01050">
    <property type="entry name" value="rpsS_bact"/>
    <property type="match status" value="1"/>
</dbReference>
<dbReference type="PANTHER" id="PTHR11880">
    <property type="entry name" value="RIBOSOMAL PROTEIN S19P FAMILY MEMBER"/>
    <property type="match status" value="1"/>
</dbReference>
<dbReference type="PANTHER" id="PTHR11880:SF8">
    <property type="entry name" value="SMALL RIBOSOMAL SUBUNIT PROTEIN US19M"/>
    <property type="match status" value="1"/>
</dbReference>
<dbReference type="Pfam" id="PF00203">
    <property type="entry name" value="Ribosomal_S19"/>
    <property type="match status" value="1"/>
</dbReference>
<dbReference type="PIRSF" id="PIRSF002144">
    <property type="entry name" value="Ribosomal_S19"/>
    <property type="match status" value="1"/>
</dbReference>
<dbReference type="PRINTS" id="PR00975">
    <property type="entry name" value="RIBOSOMALS19"/>
</dbReference>
<dbReference type="SUPFAM" id="SSF54570">
    <property type="entry name" value="Ribosomal protein S19"/>
    <property type="match status" value="1"/>
</dbReference>
<dbReference type="PROSITE" id="PS00323">
    <property type="entry name" value="RIBOSOMAL_S19"/>
    <property type="match status" value="1"/>
</dbReference>
<gene>
    <name type="primary">rpsS</name>
    <name type="synonym">rps19</name>
    <name type="ordered locus">ssl3432</name>
</gene>